<reference key="1">
    <citation type="submission" date="2003-08" db="EMBL/GenBank/DDBJ databases">
        <authorList>
            <consortium name="NIH - Xenopus Gene Collection (XGC) project"/>
        </authorList>
    </citation>
    <scope>NUCLEOTIDE SEQUENCE [LARGE SCALE MRNA]</scope>
    <source>
        <tissue>Ovary</tissue>
    </source>
</reference>
<sequence>MVIKVFLASSSSFVTIKKRQQEVLQFLEANRIEYEEVDITMLEEMRQWMYKNIPKDRLPGQGNPLPPQIFNDNAYCGDYESFFESKESNTVFLFLQLKARPAQKEL</sequence>
<protein>
    <recommendedName>
        <fullName>SH3 domain-binding glutamic acid-rich-like protein 2-A</fullName>
    </recommendedName>
</protein>
<dbReference type="EMBL" id="BC056126">
    <property type="protein sequence ID" value="AAH56126.1"/>
    <property type="molecule type" value="mRNA"/>
</dbReference>
<dbReference type="RefSeq" id="NP_001080897.1">
    <property type="nucleotide sequence ID" value="NM_001087428.1"/>
</dbReference>
<dbReference type="SMR" id="Q7T0M3"/>
<dbReference type="DNASU" id="380591"/>
<dbReference type="GeneID" id="380591"/>
<dbReference type="KEGG" id="xla:380591"/>
<dbReference type="AGR" id="Xenbase:XB-GENE-1015683"/>
<dbReference type="CTD" id="380591"/>
<dbReference type="Xenbase" id="XB-GENE-1015683">
    <property type="gene designation" value="sh3bgrl2.L"/>
</dbReference>
<dbReference type="OrthoDB" id="9932926at2759"/>
<dbReference type="Proteomes" id="UP000186698">
    <property type="component" value="Chromosome 5L"/>
</dbReference>
<dbReference type="Bgee" id="380591">
    <property type="expression patterns" value="Expressed in neurula embryo and 19 other cell types or tissues"/>
</dbReference>
<dbReference type="GO" id="GO:0005737">
    <property type="term" value="C:cytoplasm"/>
    <property type="evidence" value="ECO:0000318"/>
    <property type="project" value="GO_Central"/>
</dbReference>
<dbReference type="GO" id="GO:0005634">
    <property type="term" value="C:nucleus"/>
    <property type="evidence" value="ECO:0007669"/>
    <property type="project" value="UniProtKB-SubCell"/>
</dbReference>
<dbReference type="GO" id="GO:0017124">
    <property type="term" value="F:SH3 domain binding"/>
    <property type="evidence" value="ECO:0007669"/>
    <property type="project" value="UniProtKB-KW"/>
</dbReference>
<dbReference type="CDD" id="cd03030">
    <property type="entry name" value="GRX_SH3BGR"/>
    <property type="match status" value="1"/>
</dbReference>
<dbReference type="Gene3D" id="3.40.30.10">
    <property type="entry name" value="Glutaredoxin"/>
    <property type="match status" value="1"/>
</dbReference>
<dbReference type="InterPro" id="IPR006993">
    <property type="entry name" value="Glut_rich_SH3-bd"/>
</dbReference>
<dbReference type="InterPro" id="IPR051033">
    <property type="entry name" value="SH3BGR"/>
</dbReference>
<dbReference type="InterPro" id="IPR036249">
    <property type="entry name" value="Thioredoxin-like_sf"/>
</dbReference>
<dbReference type="PANTHER" id="PTHR12232">
    <property type="entry name" value="SH3 DOMAIN-BINDING GLUTAMIC ACID-RICH-LIKE PROTEIN"/>
    <property type="match status" value="1"/>
</dbReference>
<dbReference type="PANTHER" id="PTHR12232:SF4">
    <property type="entry name" value="SH3 DOMAIN-BINDING GLUTAMIC ACID-RICH-LIKE PROTEIN 2"/>
    <property type="match status" value="1"/>
</dbReference>
<dbReference type="Pfam" id="PF04908">
    <property type="entry name" value="SH3BGR"/>
    <property type="match status" value="1"/>
</dbReference>
<dbReference type="PIRSF" id="PIRSF008142">
    <property type="entry name" value="SH3-bind_E-rich_L"/>
    <property type="match status" value="1"/>
</dbReference>
<dbReference type="SUPFAM" id="SSF52833">
    <property type="entry name" value="Thioredoxin-like"/>
    <property type="match status" value="1"/>
</dbReference>
<evidence type="ECO:0000250" key="1"/>
<evidence type="ECO:0000255" key="2"/>
<evidence type="ECO:0000305" key="3"/>
<keyword id="KW-0539">Nucleus</keyword>
<keyword id="KW-1185">Reference proteome</keyword>
<keyword id="KW-0729">SH3-binding</keyword>
<name>SH3LA_XENLA</name>
<proteinExistence type="inferred from homology"/>
<accession>Q7T0M3</accession>
<feature type="chain" id="PRO_0000383689" description="SH3 domain-binding glutamic acid-rich-like protein 2-A">
    <location>
        <begin position="1"/>
        <end position="106"/>
    </location>
</feature>
<feature type="short sequence motif" description="SH3-binding" evidence="2">
    <location>
        <begin position="61"/>
        <end position="67"/>
    </location>
</feature>
<comment type="subcellular location">
    <subcellularLocation>
        <location evidence="1">Nucleus</location>
    </subcellularLocation>
</comment>
<comment type="similarity">
    <text evidence="3">Belongs to the SH3BGR family.</text>
</comment>
<organism>
    <name type="scientific">Xenopus laevis</name>
    <name type="common">African clawed frog</name>
    <dbReference type="NCBI Taxonomy" id="8355"/>
    <lineage>
        <taxon>Eukaryota</taxon>
        <taxon>Metazoa</taxon>
        <taxon>Chordata</taxon>
        <taxon>Craniata</taxon>
        <taxon>Vertebrata</taxon>
        <taxon>Euteleostomi</taxon>
        <taxon>Amphibia</taxon>
        <taxon>Batrachia</taxon>
        <taxon>Anura</taxon>
        <taxon>Pipoidea</taxon>
        <taxon>Pipidae</taxon>
        <taxon>Xenopodinae</taxon>
        <taxon>Xenopus</taxon>
        <taxon>Xenopus</taxon>
    </lineage>
</organism>
<gene>
    <name type="primary">sh3bgrl2-a</name>
    <name type="synonym">sh3bgrl2</name>
</gene>